<organism>
    <name type="scientific">Mus musculus</name>
    <name type="common">Mouse</name>
    <dbReference type="NCBI Taxonomy" id="10090"/>
    <lineage>
        <taxon>Eukaryota</taxon>
        <taxon>Metazoa</taxon>
        <taxon>Chordata</taxon>
        <taxon>Craniata</taxon>
        <taxon>Vertebrata</taxon>
        <taxon>Euteleostomi</taxon>
        <taxon>Mammalia</taxon>
        <taxon>Eutheria</taxon>
        <taxon>Euarchontoglires</taxon>
        <taxon>Glires</taxon>
        <taxon>Rodentia</taxon>
        <taxon>Myomorpha</taxon>
        <taxon>Muroidea</taxon>
        <taxon>Muridae</taxon>
        <taxon>Murinae</taxon>
        <taxon>Mus</taxon>
        <taxon>Mus</taxon>
    </lineage>
</organism>
<gene>
    <name evidence="13" type="primary">Upf1</name>
    <name evidence="13" type="synonym">Rent1</name>
</gene>
<dbReference type="EC" id="3.6.4.12" evidence="2"/>
<dbReference type="EC" id="3.6.4.13" evidence="2"/>
<dbReference type="EMBL" id="AF322655">
    <property type="protein sequence ID" value="AAG42830.1"/>
    <property type="molecule type" value="mRNA"/>
</dbReference>
<dbReference type="EMBL" id="AY597039">
    <property type="protein sequence ID" value="AAT46119.1"/>
    <property type="molecule type" value="Genomic_DNA"/>
</dbReference>
<dbReference type="EMBL" id="AY597038">
    <property type="protein sequence ID" value="AAT46119.1"/>
    <property type="status" value="JOINED"/>
    <property type="molecule type" value="Genomic_DNA"/>
</dbReference>
<dbReference type="EMBL" id="AK148196">
    <property type="protein sequence ID" value="BAE28409.1"/>
    <property type="molecule type" value="mRNA"/>
</dbReference>
<dbReference type="EMBL" id="BC030916">
    <property type="protein sequence ID" value="AAH30916.1"/>
    <property type="molecule type" value="mRNA"/>
</dbReference>
<dbReference type="EMBL" id="BC052149">
    <property type="protein sequence ID" value="AAH52149.1"/>
    <property type="molecule type" value="mRNA"/>
</dbReference>
<dbReference type="EMBL" id="BC056442">
    <property type="protein sequence ID" value="AAH56442.1"/>
    <property type="molecule type" value="mRNA"/>
</dbReference>
<dbReference type="EMBL" id="AF182947">
    <property type="protein sequence ID" value="AAK08652.1"/>
    <property type="molecule type" value="mRNA"/>
</dbReference>
<dbReference type="CCDS" id="CCDS52572.1">
    <molecule id="Q9EPU0-1"/>
</dbReference>
<dbReference type="CCDS" id="CCDS90409.1">
    <molecule id="Q9EPU0-2"/>
</dbReference>
<dbReference type="RefSeq" id="NP_001116301.1">
    <molecule id="Q9EPU0-1"/>
    <property type="nucleotide sequence ID" value="NM_001122829.3"/>
</dbReference>
<dbReference type="RefSeq" id="NP_109605.2">
    <molecule id="Q9EPU0-2"/>
    <property type="nucleotide sequence ID" value="NM_030680.4"/>
</dbReference>
<dbReference type="RefSeq" id="XP_006509667.1">
    <molecule id="Q9EPU0-1"/>
    <property type="nucleotide sequence ID" value="XM_006509604.5"/>
</dbReference>
<dbReference type="RefSeq" id="XP_006509668.1">
    <molecule id="Q9EPU0-1"/>
    <property type="nucleotide sequence ID" value="XM_006509605.5"/>
</dbReference>
<dbReference type="SMR" id="Q9EPU0"/>
<dbReference type="BioGRID" id="202860">
    <property type="interactions" value="59"/>
</dbReference>
<dbReference type="DIP" id="DIP-60114N"/>
<dbReference type="FunCoup" id="Q9EPU0">
    <property type="interactions" value="5242"/>
</dbReference>
<dbReference type="IntAct" id="Q9EPU0">
    <property type="interactions" value="12"/>
</dbReference>
<dbReference type="MINT" id="Q9EPU0"/>
<dbReference type="STRING" id="10090.ENSMUSP00000075089"/>
<dbReference type="GlyGen" id="Q9EPU0">
    <property type="glycosylation" value="5 sites, 2 N-linked glycans (2 sites), 1 O-linked glycan (3 sites)"/>
</dbReference>
<dbReference type="iPTMnet" id="Q9EPU0"/>
<dbReference type="PhosphoSitePlus" id="Q9EPU0"/>
<dbReference type="SwissPalm" id="Q9EPU0"/>
<dbReference type="jPOST" id="Q9EPU0"/>
<dbReference type="PaxDb" id="10090-ENSMUSP00000075089"/>
<dbReference type="PeptideAtlas" id="Q9EPU0"/>
<dbReference type="ProteomicsDB" id="253209">
    <molecule id="Q9EPU0-1"/>
</dbReference>
<dbReference type="ProteomicsDB" id="253210">
    <molecule id="Q9EPU0-2"/>
</dbReference>
<dbReference type="Pumba" id="Q9EPU0"/>
<dbReference type="Antibodypedia" id="15175">
    <property type="antibodies" value="348 antibodies from 37 providers"/>
</dbReference>
<dbReference type="DNASU" id="19704"/>
<dbReference type="Ensembl" id="ENSMUST00000075666.8">
    <molecule id="Q9EPU0-1"/>
    <property type="protein sequence ID" value="ENSMUSP00000075089.7"/>
    <property type="gene ID" value="ENSMUSG00000058301.9"/>
</dbReference>
<dbReference type="Ensembl" id="ENSMUST00000215817.2">
    <molecule id="Q9EPU0-2"/>
    <property type="protein sequence ID" value="ENSMUSP00000148927.2"/>
    <property type="gene ID" value="ENSMUSG00000058301.9"/>
</dbReference>
<dbReference type="GeneID" id="19704"/>
<dbReference type="KEGG" id="mmu:19704"/>
<dbReference type="UCSC" id="uc009mab.2">
    <molecule id="Q9EPU0-1"/>
    <property type="organism name" value="mouse"/>
</dbReference>
<dbReference type="UCSC" id="uc012gfa.1">
    <molecule id="Q9EPU0-2"/>
    <property type="organism name" value="mouse"/>
</dbReference>
<dbReference type="AGR" id="MGI:107995"/>
<dbReference type="CTD" id="5976"/>
<dbReference type="MGI" id="MGI:107995">
    <property type="gene designation" value="Upf1"/>
</dbReference>
<dbReference type="VEuPathDB" id="HostDB:ENSMUSG00000058301"/>
<dbReference type="eggNOG" id="KOG1802">
    <property type="taxonomic scope" value="Eukaryota"/>
</dbReference>
<dbReference type="GeneTree" id="ENSGT00940000157413"/>
<dbReference type="HOGENOM" id="CLU_001666_4_3_1"/>
<dbReference type="InParanoid" id="Q9EPU0"/>
<dbReference type="OMA" id="QYMQMNG"/>
<dbReference type="OrthoDB" id="6513042at2759"/>
<dbReference type="PhylomeDB" id="Q9EPU0"/>
<dbReference type="TreeFam" id="TF300554"/>
<dbReference type="Reactome" id="R-MMU-975956">
    <property type="pathway name" value="Nonsense Mediated Decay (NMD) independent of the Exon Junction Complex (EJC)"/>
</dbReference>
<dbReference type="Reactome" id="R-MMU-975957">
    <property type="pathway name" value="Nonsense Mediated Decay (NMD) enhanced by the Exon Junction Complex (EJC)"/>
</dbReference>
<dbReference type="BioGRID-ORCS" id="19704">
    <property type="hits" value="26 hits in 117 CRISPR screens"/>
</dbReference>
<dbReference type="CD-CODE" id="CE726F99">
    <property type="entry name" value="Postsynaptic density"/>
</dbReference>
<dbReference type="CD-CODE" id="DE1E139C">
    <property type="entry name" value="Chromatoid body"/>
</dbReference>
<dbReference type="ChiTaRS" id="Upf1">
    <property type="organism name" value="mouse"/>
</dbReference>
<dbReference type="PRO" id="PR:Q9EPU0"/>
<dbReference type="Proteomes" id="UP000000589">
    <property type="component" value="Chromosome 8"/>
</dbReference>
<dbReference type="RNAct" id="Q9EPU0">
    <property type="molecule type" value="protein"/>
</dbReference>
<dbReference type="Bgee" id="ENSMUSG00000058301">
    <property type="expression patterns" value="Expressed in floor plate of midbrain and 191 other cell types or tissues"/>
</dbReference>
<dbReference type="GO" id="GO:0000785">
    <property type="term" value="C:chromatin"/>
    <property type="evidence" value="ECO:0000250"/>
    <property type="project" value="HGNC-UCL"/>
</dbReference>
<dbReference type="GO" id="GO:0000781">
    <property type="term" value="C:chromosome, telomeric region"/>
    <property type="evidence" value="ECO:0007669"/>
    <property type="project" value="Ensembl"/>
</dbReference>
<dbReference type="GO" id="GO:0005829">
    <property type="term" value="C:cytosol"/>
    <property type="evidence" value="ECO:0000304"/>
    <property type="project" value="Reactome"/>
</dbReference>
<dbReference type="GO" id="GO:0035145">
    <property type="term" value="C:exon-exon junction complex"/>
    <property type="evidence" value="ECO:0007669"/>
    <property type="project" value="Ensembl"/>
</dbReference>
<dbReference type="GO" id="GO:0005654">
    <property type="term" value="C:nucleoplasm"/>
    <property type="evidence" value="ECO:0007669"/>
    <property type="project" value="Ensembl"/>
</dbReference>
<dbReference type="GO" id="GO:0000932">
    <property type="term" value="C:P-body"/>
    <property type="evidence" value="ECO:0007669"/>
    <property type="project" value="UniProtKB-SubCell"/>
</dbReference>
<dbReference type="GO" id="GO:0048471">
    <property type="term" value="C:perinuclear region of cytoplasm"/>
    <property type="evidence" value="ECO:0007669"/>
    <property type="project" value="UniProtKB-SubCell"/>
</dbReference>
<dbReference type="GO" id="GO:0044530">
    <property type="term" value="C:supraspliceosomal complex"/>
    <property type="evidence" value="ECO:0007669"/>
    <property type="project" value="Ensembl"/>
</dbReference>
<dbReference type="GO" id="GO:0005524">
    <property type="term" value="F:ATP binding"/>
    <property type="evidence" value="ECO:0007669"/>
    <property type="project" value="UniProtKB-KW"/>
</dbReference>
<dbReference type="GO" id="GO:0016887">
    <property type="term" value="F:ATP hydrolysis activity"/>
    <property type="evidence" value="ECO:0000250"/>
    <property type="project" value="UniProtKB"/>
</dbReference>
<dbReference type="GO" id="GO:0003682">
    <property type="term" value="F:chromatin binding"/>
    <property type="evidence" value="ECO:0000250"/>
    <property type="project" value="HGNC-UCL"/>
</dbReference>
<dbReference type="GO" id="GO:0036121">
    <property type="term" value="F:double-stranded DNA helicase activity"/>
    <property type="evidence" value="ECO:0000250"/>
    <property type="project" value="UniProtKB"/>
</dbReference>
<dbReference type="GO" id="GO:0044877">
    <property type="term" value="F:protein-containing complex binding"/>
    <property type="evidence" value="ECO:0007669"/>
    <property type="project" value="Ensembl"/>
</dbReference>
<dbReference type="GO" id="GO:0003723">
    <property type="term" value="F:RNA binding"/>
    <property type="evidence" value="ECO:0000250"/>
    <property type="project" value="UniProtKB"/>
</dbReference>
<dbReference type="GO" id="GO:0003724">
    <property type="term" value="F:RNA helicase activity"/>
    <property type="evidence" value="ECO:0000250"/>
    <property type="project" value="UniProtKB"/>
</dbReference>
<dbReference type="GO" id="GO:0042162">
    <property type="term" value="F:telomeric DNA binding"/>
    <property type="evidence" value="ECO:0007669"/>
    <property type="project" value="Ensembl"/>
</dbReference>
<dbReference type="GO" id="GO:0008270">
    <property type="term" value="F:zinc ion binding"/>
    <property type="evidence" value="ECO:0007669"/>
    <property type="project" value="UniProtKB-KW"/>
</dbReference>
<dbReference type="GO" id="GO:0061158">
    <property type="term" value="P:3'-UTR-mediated mRNA destabilization"/>
    <property type="evidence" value="ECO:0000250"/>
    <property type="project" value="UniProtKB"/>
</dbReference>
<dbReference type="GO" id="GO:0044770">
    <property type="term" value="P:cell cycle phase transition"/>
    <property type="evidence" value="ECO:0000250"/>
    <property type="project" value="HGNC"/>
</dbReference>
<dbReference type="GO" id="GO:0071347">
    <property type="term" value="P:cellular response to interleukin-1"/>
    <property type="evidence" value="ECO:0000250"/>
    <property type="project" value="UniProtKB"/>
</dbReference>
<dbReference type="GO" id="GO:0071222">
    <property type="term" value="P:cellular response to lipopolysaccharide"/>
    <property type="evidence" value="ECO:0000250"/>
    <property type="project" value="UniProtKB"/>
</dbReference>
<dbReference type="GO" id="GO:0006281">
    <property type="term" value="P:DNA repair"/>
    <property type="evidence" value="ECO:0000250"/>
    <property type="project" value="HGNC-UCL"/>
</dbReference>
<dbReference type="GO" id="GO:0006260">
    <property type="term" value="P:DNA replication"/>
    <property type="evidence" value="ECO:0000250"/>
    <property type="project" value="HGNC-UCL"/>
</dbReference>
<dbReference type="GO" id="GO:0071044">
    <property type="term" value="P:histone mRNA catabolic process"/>
    <property type="evidence" value="ECO:0000250"/>
    <property type="project" value="UniProtKB"/>
</dbReference>
<dbReference type="GO" id="GO:0000184">
    <property type="term" value="P:nuclear-transcribed mRNA catabolic process, nonsense-mediated decay"/>
    <property type="evidence" value="ECO:0000250"/>
    <property type="project" value="UniProtKB"/>
</dbReference>
<dbReference type="GO" id="GO:1905746">
    <property type="term" value="P:positive regulation of mRNA cis splicing, via spliceosome"/>
    <property type="evidence" value="ECO:0000315"/>
    <property type="project" value="MGI"/>
</dbReference>
<dbReference type="GO" id="GO:0032204">
    <property type="term" value="P:regulation of telomere maintenance"/>
    <property type="evidence" value="ECO:0007669"/>
    <property type="project" value="Ensembl"/>
</dbReference>
<dbReference type="GO" id="GO:0006449">
    <property type="term" value="P:regulation of translational termination"/>
    <property type="evidence" value="ECO:0000250"/>
    <property type="project" value="HGNC-UCL"/>
</dbReference>
<dbReference type="GO" id="GO:0032201">
    <property type="term" value="P:telomere maintenance via semi-conservative replication"/>
    <property type="evidence" value="ECO:0007669"/>
    <property type="project" value="Ensembl"/>
</dbReference>
<dbReference type="CDD" id="cd21407">
    <property type="entry name" value="1B_UPF1-like"/>
    <property type="match status" value="1"/>
</dbReference>
<dbReference type="CDD" id="cd18039">
    <property type="entry name" value="DEXXQc_UPF1"/>
    <property type="match status" value="1"/>
</dbReference>
<dbReference type="CDD" id="cd18808">
    <property type="entry name" value="SF1_C_Upf1"/>
    <property type="match status" value="1"/>
</dbReference>
<dbReference type="CDD" id="cd21400">
    <property type="entry name" value="ZBD_UPF1-like"/>
    <property type="match status" value="1"/>
</dbReference>
<dbReference type="FunFam" id="2.40.30.230:FF:000001">
    <property type="entry name" value="Regulator of nonsense transcripts 1"/>
    <property type="match status" value="1"/>
</dbReference>
<dbReference type="FunFam" id="3.40.50.300:FF:000097">
    <property type="entry name" value="Regulator of nonsense transcripts 1"/>
    <property type="match status" value="1"/>
</dbReference>
<dbReference type="Gene3D" id="2.40.30.230">
    <property type="match status" value="1"/>
</dbReference>
<dbReference type="Gene3D" id="6.10.140.1240">
    <property type="match status" value="1"/>
</dbReference>
<dbReference type="Gene3D" id="3.40.50.300">
    <property type="entry name" value="P-loop containing nucleotide triphosphate hydrolases"/>
    <property type="match status" value="2"/>
</dbReference>
<dbReference type="InterPro" id="IPR045055">
    <property type="entry name" value="DNA2/NAM7-like"/>
</dbReference>
<dbReference type="InterPro" id="IPR041679">
    <property type="entry name" value="DNA2/NAM7-like_C"/>
</dbReference>
<dbReference type="InterPro" id="IPR041677">
    <property type="entry name" value="DNA2/NAM7_AAA_11"/>
</dbReference>
<dbReference type="InterPro" id="IPR006935">
    <property type="entry name" value="Helicase/UvrB_N"/>
</dbReference>
<dbReference type="InterPro" id="IPR027417">
    <property type="entry name" value="P-loop_NTPase"/>
</dbReference>
<dbReference type="InterPro" id="IPR047187">
    <property type="entry name" value="SF1_C_Upf1"/>
</dbReference>
<dbReference type="InterPro" id="IPR040812">
    <property type="entry name" value="UPF1_1B_dom"/>
</dbReference>
<dbReference type="InterPro" id="IPR018999">
    <property type="entry name" value="UPF1_CH/ZBD"/>
</dbReference>
<dbReference type="PANTHER" id="PTHR10887">
    <property type="entry name" value="DNA2/NAM7 HELICASE FAMILY"/>
    <property type="match status" value="1"/>
</dbReference>
<dbReference type="PANTHER" id="PTHR10887:SF364">
    <property type="entry name" value="REGULATOR OF NONSENSE TRANSCRIPTS 1"/>
    <property type="match status" value="1"/>
</dbReference>
<dbReference type="Pfam" id="PF13086">
    <property type="entry name" value="AAA_11"/>
    <property type="match status" value="1"/>
</dbReference>
<dbReference type="Pfam" id="PF13087">
    <property type="entry name" value="AAA_12"/>
    <property type="match status" value="1"/>
</dbReference>
<dbReference type="Pfam" id="PF04851">
    <property type="entry name" value="ResIII"/>
    <property type="match status" value="1"/>
</dbReference>
<dbReference type="Pfam" id="PF18141">
    <property type="entry name" value="UPF1_1B_dom"/>
    <property type="match status" value="1"/>
</dbReference>
<dbReference type="Pfam" id="PF09416">
    <property type="entry name" value="UPF1_Zn_bind"/>
    <property type="match status" value="1"/>
</dbReference>
<dbReference type="SUPFAM" id="SSF52540">
    <property type="entry name" value="P-loop containing nucleoside triphosphate hydrolases"/>
    <property type="match status" value="1"/>
</dbReference>
<dbReference type="PROSITE" id="PS51997">
    <property type="entry name" value="UPF1_CH_RICH"/>
    <property type="match status" value="1"/>
</dbReference>
<accession>Q9EPU0</accession>
<accession>Q3UG00</accession>
<accession>Q6GYP5</accession>
<accession>Q6PHQ5</accession>
<accession>Q8K0N4</accession>
<accession>Q99PR4</accession>
<name>RENT1_MOUSE</name>
<evidence type="ECO:0000250" key="1"/>
<evidence type="ECO:0000250" key="2">
    <source>
        <dbReference type="UniProtKB" id="Q92900"/>
    </source>
</evidence>
<evidence type="ECO:0000255" key="3">
    <source>
        <dbReference type="PROSITE-ProRule" id="PRU01341"/>
    </source>
</evidence>
<evidence type="ECO:0000256" key="4">
    <source>
        <dbReference type="SAM" id="MobiDB-lite"/>
    </source>
</evidence>
<evidence type="ECO:0000269" key="5">
    <source>
    </source>
</evidence>
<evidence type="ECO:0000269" key="6">
    <source>
    </source>
</evidence>
<evidence type="ECO:0000269" key="7">
    <source>
    </source>
</evidence>
<evidence type="ECO:0000303" key="8">
    <source>
    </source>
</evidence>
<evidence type="ECO:0000303" key="9">
    <source>
    </source>
</evidence>
<evidence type="ECO:0000303" key="10">
    <source>
    </source>
</evidence>
<evidence type="ECO:0000303" key="11">
    <source ref="2"/>
</evidence>
<evidence type="ECO:0000305" key="12"/>
<evidence type="ECO:0000312" key="13">
    <source>
        <dbReference type="MGI" id="MGI:107995"/>
    </source>
</evidence>
<evidence type="ECO:0007744" key="14">
    <source>
    </source>
</evidence>
<evidence type="ECO:0007744" key="15">
    <source>
    </source>
</evidence>
<feature type="chain" id="PRO_0000080717" description="Regulator of nonsense transcripts 1">
    <location>
        <begin position="1"/>
        <end position="1124"/>
    </location>
</feature>
<feature type="domain" description="Upf1 CH-rich" evidence="3">
    <location>
        <begin position="110"/>
        <end position="267"/>
    </location>
</feature>
<feature type="region of interest" description="Sufficient for interaction with RENT2" evidence="1">
    <location>
        <begin position="1"/>
        <end position="410"/>
    </location>
</feature>
<feature type="region of interest" description="Disordered" evidence="4">
    <location>
        <begin position="39"/>
        <end position="69"/>
    </location>
</feature>
<feature type="region of interest" description="C3H" evidence="3">
    <location>
        <begin position="118"/>
        <end position="150"/>
    </location>
</feature>
<feature type="region of interest" description="CC/SHH/C" evidence="3">
    <location>
        <begin position="132"/>
        <end position="160"/>
    </location>
</feature>
<feature type="region of interest" description="C4" evidence="3">
    <location>
        <begin position="178"/>
        <end position="208"/>
    </location>
</feature>
<feature type="region of interest" description="Disordered" evidence="4">
    <location>
        <begin position="1004"/>
        <end position="1053"/>
    </location>
</feature>
<feature type="region of interest" description="Disordered" evidence="4">
    <location>
        <begin position="1066"/>
        <end position="1091"/>
    </location>
</feature>
<feature type="region of interest" description="Disordered" evidence="4">
    <location>
        <begin position="1105"/>
        <end position="1124"/>
    </location>
</feature>
<feature type="short sequence motif" description="[ST]-Q motif 1">
    <location>
        <begin position="1084"/>
        <end position="1085"/>
    </location>
</feature>
<feature type="short sequence motif" description="[ST]-Q motif 2">
    <location>
        <begin position="1102"/>
        <end position="1103"/>
    </location>
</feature>
<feature type="compositionally biased region" description="Gly residues" evidence="4">
    <location>
        <begin position="51"/>
        <end position="66"/>
    </location>
</feature>
<feature type="compositionally biased region" description="Basic residues" evidence="4">
    <location>
        <begin position="1020"/>
        <end position="1029"/>
    </location>
</feature>
<feature type="compositionally biased region" description="Polar residues" evidence="4">
    <location>
        <begin position="1036"/>
        <end position="1053"/>
    </location>
</feature>
<feature type="compositionally biased region" description="Low complexity" evidence="4">
    <location>
        <begin position="1066"/>
        <end position="1081"/>
    </location>
</feature>
<feature type="binding site" evidence="3">
    <location>
        <position position="118"/>
    </location>
    <ligand>
        <name>Zn(2+)</name>
        <dbReference type="ChEBI" id="CHEBI:29105"/>
        <label>1</label>
    </ligand>
</feature>
<feature type="binding site" evidence="3">
    <location>
        <position position="121"/>
    </location>
    <ligand>
        <name>Zn(2+)</name>
        <dbReference type="ChEBI" id="CHEBI:29105"/>
        <label>1</label>
    </ligand>
</feature>
<feature type="binding site" evidence="3">
    <location>
        <position position="132"/>
    </location>
    <ligand>
        <name>Zn(2+)</name>
        <dbReference type="ChEBI" id="CHEBI:29105"/>
        <label>2</label>
    </ligand>
</feature>
<feature type="binding site" evidence="3">
    <location>
        <position position="135"/>
    </location>
    <ligand>
        <name>Zn(2+)</name>
        <dbReference type="ChEBI" id="CHEBI:29105"/>
        <label>2</label>
    </ligand>
</feature>
<feature type="binding site" evidence="3">
    <location>
        <position position="140"/>
    </location>
    <ligand>
        <name>Zn(2+)</name>
        <dbReference type="ChEBI" id="CHEBI:29105"/>
        <label>1</label>
    </ligand>
</feature>
<feature type="binding site" evidence="3">
    <location>
        <position position="150"/>
    </location>
    <ligand>
        <name>Zn(2+)</name>
        <dbReference type="ChEBI" id="CHEBI:29105"/>
        <label>1</label>
    </ligand>
</feature>
<feature type="binding site" evidence="3">
    <location>
        <position position="154"/>
    </location>
    <ligand>
        <name>Zn(2+)</name>
        <dbReference type="ChEBI" id="CHEBI:29105"/>
        <label>2</label>
    </ligand>
</feature>
<feature type="binding site" evidence="3">
    <location>
        <position position="160"/>
    </location>
    <ligand>
        <name>Zn(2+)</name>
        <dbReference type="ChEBI" id="CHEBI:29105"/>
        <label>2</label>
    </ligand>
</feature>
<feature type="binding site" evidence="3">
    <location>
        <position position="178"/>
    </location>
    <ligand>
        <name>Zn(2+)</name>
        <dbReference type="ChEBI" id="CHEBI:29105"/>
        <label>3</label>
    </ligand>
</feature>
<feature type="binding site" evidence="3">
    <location>
        <position position="181"/>
    </location>
    <ligand>
        <name>Zn(2+)</name>
        <dbReference type="ChEBI" id="CHEBI:29105"/>
        <label>3</label>
    </ligand>
</feature>
<feature type="binding site" evidence="3">
    <location>
        <position position="204"/>
    </location>
    <ligand>
        <name>Zn(2+)</name>
        <dbReference type="ChEBI" id="CHEBI:29105"/>
        <label>3</label>
    </ligand>
</feature>
<feature type="binding site" evidence="3">
    <location>
        <position position="208"/>
    </location>
    <ligand>
        <name>Zn(2+)</name>
        <dbReference type="ChEBI" id="CHEBI:29105"/>
        <label>3</label>
    </ligand>
</feature>
<feature type="binding site" evidence="2">
    <location>
        <position position="481"/>
    </location>
    <ligand>
        <name>ATP</name>
        <dbReference type="ChEBI" id="CHEBI:30616"/>
    </ligand>
</feature>
<feature type="binding site" evidence="2">
    <location>
        <begin position="501"/>
        <end position="505"/>
    </location>
    <ligand>
        <name>ATP</name>
        <dbReference type="ChEBI" id="CHEBI:30616"/>
    </ligand>
</feature>
<feature type="binding site" evidence="2">
    <location>
        <position position="671"/>
    </location>
    <ligand>
        <name>ATP</name>
        <dbReference type="ChEBI" id="CHEBI:30616"/>
    </ligand>
</feature>
<feature type="binding site" evidence="2">
    <location>
        <position position="708"/>
    </location>
    <ligand>
        <name>ATP</name>
        <dbReference type="ChEBI" id="CHEBI:30616"/>
    </ligand>
</feature>
<feature type="binding site" evidence="2">
    <location>
        <position position="839"/>
    </location>
    <ligand>
        <name>ATP</name>
        <dbReference type="ChEBI" id="CHEBI:30616"/>
    </ligand>
</feature>
<feature type="modified residue" description="Phosphoserine" evidence="2">
    <location>
        <position position="10"/>
    </location>
</feature>
<feature type="modified residue" description="Phosphoserine" evidence="2">
    <location>
        <position position="31"/>
    </location>
</feature>
<feature type="modified residue" description="Phosphoserine" evidence="2">
    <location>
        <position position="560"/>
    </location>
</feature>
<feature type="modified residue" description="Phosphoserine" evidence="2">
    <location>
        <position position="951"/>
    </location>
</feature>
<feature type="modified residue" description="Omega-N-methylarginine" evidence="2">
    <location>
        <position position="1014"/>
    </location>
</feature>
<feature type="modified residue" description="Phosphoserine" evidence="2">
    <location>
        <position position="1084"/>
    </location>
</feature>
<feature type="modified residue" description="Phosphoserine" evidence="14 15">
    <location>
        <position position="1102"/>
    </location>
</feature>
<feature type="modified residue" description="Phosphoserine" evidence="15">
    <location>
        <position position="1105"/>
    </location>
</feature>
<feature type="modified residue" description="Phosphoserine" evidence="2">
    <location>
        <position position="1122"/>
    </location>
</feature>
<feature type="splice variant" id="VSP_025764" description="In isoform 2." evidence="8 9 10 11">
    <location>
        <begin position="348"/>
        <end position="358"/>
    </location>
</feature>
<feature type="sequence conflict" description="In Ref. 3; AAT46119." evidence="12" ref="3">
    <original>G</original>
    <variation>S</variation>
    <location>
        <position position="56"/>
    </location>
</feature>
<feature type="sequence conflict" description="In Ref. 4; BAE28409." evidence="12" ref="4">
    <original>G</original>
    <variation>A</variation>
    <location>
        <position position="58"/>
    </location>
</feature>
<feature type="sequence conflict" description="In Ref. 3; AAT46119." evidence="12" ref="3">
    <original>A</original>
    <variation>P</variation>
    <location>
        <position position="60"/>
    </location>
</feature>
<feature type="sequence conflict" description="In Ref. 3; AAT46119." evidence="12" ref="3">
    <original>A</original>
    <variation>S</variation>
    <location>
        <position position="71"/>
    </location>
</feature>
<feature type="sequence conflict" description="In Ref. 3; AAT46119." evidence="12" ref="3">
    <original>R</original>
    <variation>K</variation>
    <location>
        <position position="428"/>
    </location>
</feature>
<feature type="sequence conflict" description="In Ref. 3; AAT46119." evidence="12" ref="3">
    <original>D</original>
    <variation>E</variation>
    <location>
        <position position="439"/>
    </location>
</feature>
<feature type="sequence conflict" description="In Ref. 3; AAT46119." evidence="12" ref="3">
    <original>V</original>
    <variation>F</variation>
    <location>
        <position position="460"/>
    </location>
</feature>
<feature type="sequence conflict" description="In Ref. 3; AAT46119." evidence="12" ref="3">
    <original>L</original>
    <variation>F</variation>
    <location>
        <position position="495"/>
    </location>
</feature>
<feature type="sequence conflict" description="In Ref. 4; BAE28409." evidence="12" ref="4">
    <original>K</original>
    <variation>E</variation>
    <location>
        <position position="633"/>
    </location>
</feature>
<feature type="sequence conflict" description="In Ref. 4; BAE28409." evidence="12" ref="4">
    <original>H</original>
    <variation>Y</variation>
    <location>
        <position position="820"/>
    </location>
</feature>
<keyword id="KW-0025">Alternative splicing</keyword>
<keyword id="KW-0067">ATP-binding</keyword>
<keyword id="KW-0963">Cytoplasm</keyword>
<keyword id="KW-0347">Helicase</keyword>
<keyword id="KW-0378">Hydrolase</keyword>
<keyword id="KW-0479">Metal-binding</keyword>
<keyword id="KW-0488">Methylation</keyword>
<keyword id="KW-0866">Nonsense-mediated mRNA decay</keyword>
<keyword id="KW-0547">Nucleotide-binding</keyword>
<keyword id="KW-0539">Nucleus</keyword>
<keyword id="KW-0597">Phosphoprotein</keyword>
<keyword id="KW-1185">Reference proteome</keyword>
<keyword id="KW-0677">Repeat</keyword>
<keyword id="KW-0694">RNA-binding</keyword>
<keyword id="KW-0862">Zinc</keyword>
<keyword id="KW-0863">Zinc-finger</keyword>
<reference key="1">
    <citation type="journal article" date="2001" name="Hum. Mol. Genet.">
        <title>Rent1, a trans-effector of nonsense-mediated mRNA decay, is essential for mammalian embryonic viability.</title>
        <authorList>
            <person name="Medghalchi S.M."/>
            <person name="Frischmeyer P.A."/>
            <person name="Mendell J.T."/>
            <person name="Kelly A.G."/>
            <person name="Lawler A.M."/>
            <person name="Dietz H.C."/>
        </authorList>
    </citation>
    <scope>NUCLEOTIDE SEQUENCE [MRNA] (ISOFORM 2)</scope>
    <scope>DISRUPTION PHENOTYPE</scope>
    <source>
        <strain>129/Sv</strain>
    </source>
</reference>
<reference key="2">
    <citation type="submission" date="1999-09" db="EMBL/GenBank/DDBJ databases">
        <title>Genomic structure, chromosomal localization and expression of murine nonsense mRNA reducing factor 1 (mNORF1).</title>
        <authorList>
            <person name="Selg M."/>
            <person name="Strande J."/>
            <person name="Beck-Engeser G.B.J."/>
            <person name="Liehr T."/>
            <person name="Winkler T."/>
            <person name="Jack H.-M."/>
        </authorList>
    </citation>
    <scope>NUCLEOTIDE SEQUENCE [MRNA] (ISOFORM 2)</scope>
</reference>
<reference key="3">
    <citation type="submission" date="2004-04" db="EMBL/GenBank/DDBJ databases">
        <title>Cloning, genomic structure, chromosomal localization and expression of mHUPF1, the murine homolog of the yeast nonsense mRNA reducing factor UPF1.</title>
        <authorList>
            <person name="Selg M."/>
            <person name="Strande J.L."/>
            <person name="Liehr T."/>
            <person name="Roth E."/>
            <person name="Beck-Engeser G.B."/>
            <person name="Winkler T.H."/>
            <person name="Jack H.-M."/>
        </authorList>
    </citation>
    <scope>NUCLEOTIDE SEQUENCE [GENOMIC DNA] (ISOFORM 2)</scope>
    <source>
        <strain>129/SvJ</strain>
    </source>
</reference>
<reference key="4">
    <citation type="journal article" date="2005" name="Science">
        <title>The transcriptional landscape of the mammalian genome.</title>
        <authorList>
            <person name="Carninci P."/>
            <person name="Kasukawa T."/>
            <person name="Katayama S."/>
            <person name="Gough J."/>
            <person name="Frith M.C."/>
            <person name="Maeda N."/>
            <person name="Oyama R."/>
            <person name="Ravasi T."/>
            <person name="Lenhard B."/>
            <person name="Wells C."/>
            <person name="Kodzius R."/>
            <person name="Shimokawa K."/>
            <person name="Bajic V.B."/>
            <person name="Brenner S.E."/>
            <person name="Batalov S."/>
            <person name="Forrest A.R."/>
            <person name="Zavolan M."/>
            <person name="Davis M.J."/>
            <person name="Wilming L.G."/>
            <person name="Aidinis V."/>
            <person name="Allen J.E."/>
            <person name="Ambesi-Impiombato A."/>
            <person name="Apweiler R."/>
            <person name="Aturaliya R.N."/>
            <person name="Bailey T.L."/>
            <person name="Bansal M."/>
            <person name="Baxter L."/>
            <person name="Beisel K.W."/>
            <person name="Bersano T."/>
            <person name="Bono H."/>
            <person name="Chalk A.M."/>
            <person name="Chiu K.P."/>
            <person name="Choudhary V."/>
            <person name="Christoffels A."/>
            <person name="Clutterbuck D.R."/>
            <person name="Crowe M.L."/>
            <person name="Dalla E."/>
            <person name="Dalrymple B.P."/>
            <person name="de Bono B."/>
            <person name="Della Gatta G."/>
            <person name="di Bernardo D."/>
            <person name="Down T."/>
            <person name="Engstrom P."/>
            <person name="Fagiolini M."/>
            <person name="Faulkner G."/>
            <person name="Fletcher C.F."/>
            <person name="Fukushima T."/>
            <person name="Furuno M."/>
            <person name="Futaki S."/>
            <person name="Gariboldi M."/>
            <person name="Georgii-Hemming P."/>
            <person name="Gingeras T.R."/>
            <person name="Gojobori T."/>
            <person name="Green R.E."/>
            <person name="Gustincich S."/>
            <person name="Harbers M."/>
            <person name="Hayashi Y."/>
            <person name="Hensch T.K."/>
            <person name="Hirokawa N."/>
            <person name="Hill D."/>
            <person name="Huminiecki L."/>
            <person name="Iacono M."/>
            <person name="Ikeo K."/>
            <person name="Iwama A."/>
            <person name="Ishikawa T."/>
            <person name="Jakt M."/>
            <person name="Kanapin A."/>
            <person name="Katoh M."/>
            <person name="Kawasawa Y."/>
            <person name="Kelso J."/>
            <person name="Kitamura H."/>
            <person name="Kitano H."/>
            <person name="Kollias G."/>
            <person name="Krishnan S.P."/>
            <person name="Kruger A."/>
            <person name="Kummerfeld S.K."/>
            <person name="Kurochkin I.V."/>
            <person name="Lareau L.F."/>
            <person name="Lazarevic D."/>
            <person name="Lipovich L."/>
            <person name="Liu J."/>
            <person name="Liuni S."/>
            <person name="McWilliam S."/>
            <person name="Madan Babu M."/>
            <person name="Madera M."/>
            <person name="Marchionni L."/>
            <person name="Matsuda H."/>
            <person name="Matsuzawa S."/>
            <person name="Miki H."/>
            <person name="Mignone F."/>
            <person name="Miyake S."/>
            <person name="Morris K."/>
            <person name="Mottagui-Tabar S."/>
            <person name="Mulder N."/>
            <person name="Nakano N."/>
            <person name="Nakauchi H."/>
            <person name="Ng P."/>
            <person name="Nilsson R."/>
            <person name="Nishiguchi S."/>
            <person name="Nishikawa S."/>
            <person name="Nori F."/>
            <person name="Ohara O."/>
            <person name="Okazaki Y."/>
            <person name="Orlando V."/>
            <person name="Pang K.C."/>
            <person name="Pavan W.J."/>
            <person name="Pavesi G."/>
            <person name="Pesole G."/>
            <person name="Petrovsky N."/>
            <person name="Piazza S."/>
            <person name="Reed J."/>
            <person name="Reid J.F."/>
            <person name="Ring B.Z."/>
            <person name="Ringwald M."/>
            <person name="Rost B."/>
            <person name="Ruan Y."/>
            <person name="Salzberg S.L."/>
            <person name="Sandelin A."/>
            <person name="Schneider C."/>
            <person name="Schoenbach C."/>
            <person name="Sekiguchi K."/>
            <person name="Semple C.A."/>
            <person name="Seno S."/>
            <person name="Sessa L."/>
            <person name="Sheng Y."/>
            <person name="Shibata Y."/>
            <person name="Shimada H."/>
            <person name="Shimada K."/>
            <person name="Silva D."/>
            <person name="Sinclair B."/>
            <person name="Sperling S."/>
            <person name="Stupka E."/>
            <person name="Sugiura K."/>
            <person name="Sultana R."/>
            <person name="Takenaka Y."/>
            <person name="Taki K."/>
            <person name="Tammoja K."/>
            <person name="Tan S.L."/>
            <person name="Tang S."/>
            <person name="Taylor M.S."/>
            <person name="Tegner J."/>
            <person name="Teichmann S.A."/>
            <person name="Ueda H.R."/>
            <person name="van Nimwegen E."/>
            <person name="Verardo R."/>
            <person name="Wei C.L."/>
            <person name="Yagi K."/>
            <person name="Yamanishi H."/>
            <person name="Zabarovsky E."/>
            <person name="Zhu S."/>
            <person name="Zimmer A."/>
            <person name="Hide W."/>
            <person name="Bult C."/>
            <person name="Grimmond S.M."/>
            <person name="Teasdale R.D."/>
            <person name="Liu E.T."/>
            <person name="Brusic V."/>
            <person name="Quackenbush J."/>
            <person name="Wahlestedt C."/>
            <person name="Mattick J.S."/>
            <person name="Hume D.A."/>
            <person name="Kai C."/>
            <person name="Sasaki D."/>
            <person name="Tomaru Y."/>
            <person name="Fukuda S."/>
            <person name="Kanamori-Katayama M."/>
            <person name="Suzuki M."/>
            <person name="Aoki J."/>
            <person name="Arakawa T."/>
            <person name="Iida J."/>
            <person name="Imamura K."/>
            <person name="Itoh M."/>
            <person name="Kato T."/>
            <person name="Kawaji H."/>
            <person name="Kawagashira N."/>
            <person name="Kawashima T."/>
            <person name="Kojima M."/>
            <person name="Kondo S."/>
            <person name="Konno H."/>
            <person name="Nakano K."/>
            <person name="Ninomiya N."/>
            <person name="Nishio T."/>
            <person name="Okada M."/>
            <person name="Plessy C."/>
            <person name="Shibata K."/>
            <person name="Shiraki T."/>
            <person name="Suzuki S."/>
            <person name="Tagami M."/>
            <person name="Waki K."/>
            <person name="Watahiki A."/>
            <person name="Okamura-Oho Y."/>
            <person name="Suzuki H."/>
            <person name="Kawai J."/>
            <person name="Hayashizaki Y."/>
        </authorList>
    </citation>
    <scope>NUCLEOTIDE SEQUENCE [LARGE SCALE MRNA] (ISOFORM 1)</scope>
    <source>
        <strain>C57BL/6J</strain>
    </source>
</reference>
<reference key="5">
    <citation type="journal article" date="2004" name="Genome Res.">
        <title>The status, quality, and expansion of the NIH full-length cDNA project: the Mammalian Gene Collection (MGC).</title>
        <authorList>
            <consortium name="The MGC Project Team"/>
        </authorList>
    </citation>
    <scope>NUCLEOTIDE SEQUENCE [LARGE SCALE MRNA] (ISOFORMS 1 AND 2)</scope>
    <source>
        <strain>C57BL/6J</strain>
        <tissue>Brain</tissue>
        <tissue>Embryo</tissue>
        <tissue>Eye</tissue>
    </source>
</reference>
<reference key="6">
    <citation type="journal article" date="1996" name="Proc. Natl. Acad. Sci. U.S.A.">
        <title>Mammalian orthologues of a yeast regulator of nonsense transcript stability.</title>
        <authorList>
            <person name="Perlick H.A."/>
            <person name="Medghalchi S.M."/>
            <person name="Spencer F.A."/>
            <person name="Kendzior R.J. Jr."/>
            <person name="Dietz H.C."/>
        </authorList>
    </citation>
    <scope>NUCLEOTIDE SEQUENCE [MRNA] OF 73-1113 (ISOFORM 2)</scope>
    <source>
        <strain>129/Sv</strain>
    </source>
</reference>
<reference key="7">
    <citation type="journal article" date="2007" name="Proc. Natl. Acad. Sci. U.S.A.">
        <title>Large-scale phosphorylation analysis of mouse liver.</title>
        <authorList>
            <person name="Villen J."/>
            <person name="Beausoleil S.A."/>
            <person name="Gerber S.A."/>
            <person name="Gygi S.P."/>
        </authorList>
    </citation>
    <scope>PHOSPHORYLATION [LARGE SCALE ANALYSIS] AT SER-1102</scope>
    <scope>IDENTIFICATION BY MASS SPECTROMETRY [LARGE SCALE ANALYSIS]</scope>
    <source>
        <tissue>Liver</tissue>
    </source>
</reference>
<reference key="8">
    <citation type="journal article" date="2010" name="Cell">
        <title>A tissue-specific atlas of mouse protein phosphorylation and expression.</title>
        <authorList>
            <person name="Huttlin E.L."/>
            <person name="Jedrychowski M.P."/>
            <person name="Elias J.E."/>
            <person name="Goswami T."/>
            <person name="Rad R."/>
            <person name="Beausoleil S.A."/>
            <person name="Villen J."/>
            <person name="Haas W."/>
            <person name="Sowa M.E."/>
            <person name="Gygi S.P."/>
        </authorList>
    </citation>
    <scope>PHOSPHORYLATION [LARGE SCALE ANALYSIS] AT SER-1102 AND SER-1105</scope>
    <scope>IDENTIFICATION BY MASS SPECTROMETRY [LARGE SCALE ANALYSIS]</scope>
    <source>
        <tissue>Brain</tissue>
        <tissue>Brown adipose tissue</tissue>
        <tissue>Heart</tissue>
        <tissue>Kidney</tissue>
        <tissue>Liver</tissue>
        <tissue>Lung</tissue>
        <tissue>Pancreas</tissue>
        <tissue>Spleen</tissue>
        <tissue>Testis</tissue>
    </source>
</reference>
<reference key="9">
    <citation type="journal article" date="2016" name="PLoS Genet.">
        <title>Chromatoid Body Protein TDRD6 Supports Long 3' UTR Triggered Nonsense Mediated mRNA Decay.</title>
        <authorList>
            <person name="Fanourgakis G."/>
            <person name="Lesche M."/>
            <person name="Akpinar M."/>
            <person name="Dahl A."/>
            <person name="Jessberger R."/>
        </authorList>
    </citation>
    <scope>INTERACTION WITH UPF1 AND DDX4</scope>
    <scope>SUBCELLULAR LOCATION</scope>
    <scope>TISSUE SPECIFICITY</scope>
    <scope>DEVELOPMENTAL STAGE</scope>
</reference>
<reference key="10">
    <citation type="journal article" date="2022" name="Sci. Adv.">
        <title>RNA binding protein RBM46 regulates mitotic-to-meiotic transition in spermatogenesis.</title>
        <authorList>
            <person name="Qian B."/>
            <person name="Li Y."/>
            <person name="Yan R."/>
            <person name="Han S."/>
            <person name="Bu Z."/>
            <person name="Gong J."/>
            <person name="Zheng B."/>
            <person name="Yuan Z."/>
            <person name="Ren S."/>
            <person name="He Q."/>
            <person name="Zhang J."/>
            <person name="Xu C."/>
            <person name="Wang R."/>
            <person name="Sun Z."/>
            <person name="Lin M."/>
            <person name="Zhou J."/>
            <person name="Ye L."/>
        </authorList>
    </citation>
    <scope>INTERACTION WITH RBM46</scope>
</reference>
<protein>
    <recommendedName>
        <fullName evidence="13">Regulator of nonsense transcripts 1</fullName>
        <ecNumber evidence="2">3.6.4.12</ecNumber>
        <ecNumber evidence="2">3.6.4.13</ecNumber>
    </recommendedName>
    <alternativeName>
        <fullName evidence="8">ATP-dependent helicase RENT1</fullName>
    </alternativeName>
    <alternativeName>
        <fullName evidence="2">Nonsense mRNA reducing factor 1</fullName>
        <shortName evidence="2">NORF1</shortName>
    </alternativeName>
    <alternativeName>
        <fullName>Up-frameshift suppressor 1 homolog</fullName>
        <shortName>mUpf1</shortName>
    </alternativeName>
</protein>
<proteinExistence type="evidence at protein level"/>
<sequence>MSVEAYGPSSQTLTFLDTEEAELLGADTQGSEFEFTDFTLPSQTQTPPGGPGGAGGPGGAGAGGAAGQLDAQVGPEGILQNGAVDDSVAKTSQLLAELNFEEDEEDTYYTKDLPVHACSYCGIHDPACVVYCNTSKKWFCNGRGNTSGSHIVNHLVRAKCKEVTLHKDGPLGETVLECYNCGCRNVFLLGFIPAKADSVVVLLCRQPCASQSSLKDINWDSSQWQPLIQDRCFLSWLVKIPSEQEQLRARQITAQQINKLEELWKENPSATLEDLEKPGVDEEPQHVLLRYEDAYQYQNIFGPLVKLEADYDKKLKESQTQDNITVRWDLGLNKKRIAFFTLPKTDSGNEDLVIIWLRDMRLMQGDEICLRYKGDLAPLWKGIGHVIKVPDNYGDEIAIELRSSVGAPVEVTHNFQVDFVWKSTSFDRMQSALKTFAVDETSVSGYIYHKLLGHEVEDVVIKCQLPKRFTAQGLPDLNHSQVYAVKTVLQRPLSLIQGPPGTGKTVTSATIVYHLARQGNGPVLVCAPSNIAVDQLTEKIHQTGLKVVRLCAKSREAIDSPVSFLALHNQIRNMDSMPELQKLQQLKDETGELSSADEKRYRALKRTAERELLMNADVICCTCVGAGDPRLAKMQFRSILIDESTQATEPECMVPVVLGAKQLILVGDHCQLGPVVMCKKAAKAGLSQSLFERLVVLGIRPIRLQVQYRMHPALSAFPSNIFYEGSLQNGVTAADRVKKGFDFQWPQPDKPMFFYVTQGQEEIASSGTSYLNRTEAANVEKITTKLLKAGAKPDQIGIITPYEGQRSYLVQYMQFSGSLHTKLYQEVEIASVDAFQGREKDFIILSCVRANEHQGIGFLNDPRRLNVALTRARYGVIIVGNPKALSKQPLWNHLLSYYKEQKALVEGPLNNLRESLMQFSKPRKLVNTVNPGARFMTTAMYDAREAIIPGSVYDRSSQGRPSNMYFQTHDQISMISAGPSHVAAMNIPIPFNLVMPPMPPPGYFGQANGPAAGRGTPKTKTGRGGRQKNRFGLPGPSQTTLPNSQASQDVASQPFSQGALTQGYVSMSQPSQMSQPGLSQPELSQDSYLGDEFKSQIDVALSQDSTYQGERAYQHGGVTGLSQY</sequence>
<comment type="function">
    <text evidence="2 6">RNA-dependent helicase required for nonsense-mediated decay (NMD) of aberrant mRNAs containing premature stop codons and modulates the expression level of normal mRNAs (By similarity). Is recruited to mRNAs upon translation termination and undergoes a cycle of phosphorylation and dephosphorylation; its phosphorylation appears to be a key step in NMD (By similarity). Recruited by release factors to stalled ribosomes together with the SMG1C protein kinase complex to form the transient SURF (SMG1-UPF1-eRF1-eRF3) complex (By similarity). In EJC-dependent NMD, the SURF complex associates with the exon junction complex (EJC) (located 50-55 or more nucleotides downstream from the termination codon) through UPF2 and allows the formation of an UPF1-UPF2-UPF3 surveillance complex which is believed to activate NMD (By similarity). Phosphorylated UPF1 is recognized by EST1B/SMG5, SMG6 and SMG7 which are thought to provide a link to the mRNA degradation machinery involving exonucleolytic and endonucleolytic pathways, and to serve as adapters to protein phosphatase 2A (PP2A), thereby triggering UPF1 dephosphorylation and allowing the recycling of NMD factors (By similarity). UPF1 can also activate NMD without UPF2 or UPF3, and in the absence of the NMD-enhancing downstream EJC indicative for alternative NMD pathways (By similarity). Plays a role in replication-dependent histone mRNA degradation at the end of phase S; the function is independent of UPF2 (By similarity). For the recognition of premature termination codons (PTC) and initiation of NMD a competitive interaction between UPF1 and PABPC1 with the ribosome-bound release factors is proposed (By similarity). The ATPase activity of UPF1 is required for disassembly of mRNPs undergoing NMD (By similarity). Together with UPF2 and dependent on TDRD6, mediates the degradation of mRNA harboring long 3'UTR by inducing the NMD machinery (PubMed:27149095). Also capable of unwinding double-stranded DNA and translocating on single-stranded DNA (By similarity).</text>
</comment>
<comment type="catalytic activity">
    <reaction evidence="2">
        <text>ATP + H2O = ADP + phosphate + H(+)</text>
        <dbReference type="Rhea" id="RHEA:13065"/>
        <dbReference type="ChEBI" id="CHEBI:15377"/>
        <dbReference type="ChEBI" id="CHEBI:15378"/>
        <dbReference type="ChEBI" id="CHEBI:30616"/>
        <dbReference type="ChEBI" id="CHEBI:43474"/>
        <dbReference type="ChEBI" id="CHEBI:456216"/>
        <dbReference type="EC" id="3.6.4.12"/>
    </reaction>
    <physiologicalReaction direction="left-to-right" evidence="2">
        <dbReference type="Rhea" id="RHEA:13066"/>
    </physiologicalReaction>
</comment>
<comment type="catalytic activity">
    <reaction evidence="2">
        <text>ATP + H2O = ADP + phosphate + H(+)</text>
        <dbReference type="Rhea" id="RHEA:13065"/>
        <dbReference type="ChEBI" id="CHEBI:15377"/>
        <dbReference type="ChEBI" id="CHEBI:15378"/>
        <dbReference type="ChEBI" id="CHEBI:30616"/>
        <dbReference type="ChEBI" id="CHEBI:43474"/>
        <dbReference type="ChEBI" id="CHEBI:456216"/>
        <dbReference type="EC" id="3.6.4.13"/>
    </reaction>
    <physiologicalReaction direction="left-to-right" evidence="2">
        <dbReference type="Rhea" id="RHEA:13066"/>
    </physiologicalReaction>
</comment>
<comment type="subunit">
    <text evidence="2 6 7">Found in a post-splicing messenger ribonucleoprotein (mRNP) complex. Associates with the exon junction complex (EJC). Associates with the SGM1C complex; is phosphorylated by the complex kinase component SGM1. Part of a complex composed of SMG1, DHX34 and UPF1; within the complex DHX34 acts as a scaffolding protein to facilitate SMG1 phosphorylation of UPF1 (By similarity). Interacts with UPF2. Interacts with UPF3A and UPF3B. Interacts with EST1A. Interacts with SLBP. Interacts (when hyperphosphorylated) with PNRC2. Interacts with AGO1 and AGO2. Interacts with GSPT2. Interacts with isoform 1 and isoform 5 of ADAR/ADAR1. Interacts with SMG7. Interacts with ZC3H12A; this interaction occurs in a mRNA translationally active- and termination-dependent manner and is essential for ZC3H12A-mediated degradation of target mRNAs. Interacts with CPSF6. Interacts with MOV10; the interaction is direct and RNA-dependent. Interacts with SHFL; the interaction increases in the presence of RNA. Interacts with UPF2 and DDX4; interactions are mediated by TDRD6 (PubMed:27149095). Interacts with DHX34 and PABPC1/PABP1; the interactions are RNA-independent (By similarity). Interacts with RBM46 (PubMed:36001654).</text>
</comment>
<comment type="interaction">
    <interactant intactId="EBI-6876715">
        <id>Q9EPU0</id>
    </interactant>
    <interactant intactId="EBI-16026214">
        <id>Q7TMF2</id>
        <label>Eri1</label>
    </interactant>
    <organismsDiffer>false</organismsDiffer>
    <experiments>2</experiments>
</comment>
<comment type="subcellular location">
    <subcellularLocation>
        <location evidence="6">Cytoplasm</location>
    </subcellularLocation>
    <subcellularLocation>
        <location evidence="2">Cytoplasm</location>
        <location evidence="2">P-body</location>
    </subcellularLocation>
    <subcellularLocation>
        <location evidence="2">Nucleus</location>
    </subcellularLocation>
    <subcellularLocation>
        <location evidence="6">Cytoplasm</location>
        <location evidence="6">Perinuclear region</location>
    </subcellularLocation>
    <text evidence="2 6">Hyperphosphorylated form is targeted to the P-body, while unphosphorylated protein is distributed throughout the cytoplasm (By similarity). Localized in the chromatoid bodies of round spermatids (PubMed:27149095).</text>
</comment>
<comment type="alternative products">
    <event type="alternative splicing"/>
    <isoform>
        <id>Q9EPU0-1</id>
        <name>1</name>
        <sequence type="displayed"/>
    </isoform>
    <isoform>
        <id>Q9EPU0-2</id>
        <name>2</name>
        <sequence type="described" ref="VSP_025764"/>
    </isoform>
</comment>
<comment type="tissue specificity">
    <text evidence="6">Localizes in male germ cells.</text>
</comment>
<comment type="developmental stage">
    <text evidence="6">Weakly expressed in neonatal testes and expression increases during the development of spermatocytes and spermatids, in the late meiotic and postmeiotic stages of spermatogenesis.</text>
</comment>
<comment type="domain">
    <text evidence="2">The [ST]-Q motif constitutes a recognition sequence for kinases from the PI3/PI4-kinase family.</text>
</comment>
<comment type="PTM">
    <text evidence="2">Phosphorylated by SMG1; required for formation of mRNA surveillance complexes.</text>
</comment>
<comment type="disruption phenotype">
    <text evidence="5">Embryos are viable in pre-implantation period, show complete loss of NMD but are resorbed shortly after implantation.</text>
</comment>
<comment type="similarity">
    <text evidence="12">Belongs to the DNA2/NAM7 helicase family.</text>
</comment>